<proteinExistence type="evidence at protein level"/>
<organism>
    <name type="scientific">Caenorhabditis elegans</name>
    <dbReference type="NCBI Taxonomy" id="6239"/>
    <lineage>
        <taxon>Eukaryota</taxon>
        <taxon>Metazoa</taxon>
        <taxon>Ecdysozoa</taxon>
        <taxon>Nematoda</taxon>
        <taxon>Chromadorea</taxon>
        <taxon>Rhabditida</taxon>
        <taxon>Rhabditina</taxon>
        <taxon>Rhabditomorpha</taxon>
        <taxon>Rhabditoidea</taxon>
        <taxon>Rhabditidae</taxon>
        <taxon>Peloderinae</taxon>
        <taxon>Caenorhabditis</taxon>
    </lineage>
</organism>
<dbReference type="EMBL" id="BX284603">
    <property type="protein sequence ID" value="SBV53364.1"/>
    <property type="molecule type" value="Genomic_DNA"/>
</dbReference>
<dbReference type="PIR" id="T20721">
    <property type="entry name" value="T20721"/>
</dbReference>
<dbReference type="RefSeq" id="NP_001317871.1">
    <property type="nucleotide sequence ID" value="NM_001330837.3"/>
</dbReference>
<dbReference type="SMR" id="Q19319"/>
<dbReference type="BioGRID" id="40826">
    <property type="interactions" value="2"/>
</dbReference>
<dbReference type="FunCoup" id="Q19319">
    <property type="interactions" value="1398"/>
</dbReference>
<dbReference type="IntAct" id="Q19319">
    <property type="interactions" value="1"/>
</dbReference>
<dbReference type="STRING" id="6239.F25F2.2.1"/>
<dbReference type="GlyCosmos" id="Q19319">
    <property type="glycosylation" value="31 sites, No reported glycans"/>
</dbReference>
<dbReference type="iPTMnet" id="Q19319"/>
<dbReference type="PaxDb" id="6239-F25F2.2a"/>
<dbReference type="PeptideAtlas" id="Q19319"/>
<dbReference type="EnsemblMetazoa" id="F25F2.2.1">
    <property type="protein sequence ID" value="F25F2.2.1"/>
    <property type="gene ID" value="WBGene00000396"/>
</dbReference>
<dbReference type="GeneID" id="175590"/>
<dbReference type="KEGG" id="cel:CELE_F25F2.2"/>
<dbReference type="UCSC" id="F25F2.2">
    <property type="organism name" value="c. elegans"/>
</dbReference>
<dbReference type="AGR" id="WB:WBGene00000396"/>
<dbReference type="CTD" id="175590"/>
<dbReference type="WormBase" id="F25F2.2">
    <property type="protein sequence ID" value="CE51760"/>
    <property type="gene ID" value="WBGene00000396"/>
    <property type="gene designation" value="cdh-4"/>
</dbReference>
<dbReference type="eggNOG" id="KOG1219">
    <property type="taxonomic scope" value="Eukaryota"/>
</dbReference>
<dbReference type="HOGENOM" id="CLU_000042_2_0_1"/>
<dbReference type="InParanoid" id="Q19319"/>
<dbReference type="OrthoDB" id="5855789at2759"/>
<dbReference type="PhylomeDB" id="Q19319"/>
<dbReference type="Reactome" id="R-CEL-351906">
    <property type="pathway name" value="Apoptotic cleavage of cell adhesion proteins"/>
</dbReference>
<dbReference type="Reactome" id="R-CEL-6798695">
    <property type="pathway name" value="Neutrophil degranulation"/>
</dbReference>
<dbReference type="Reactome" id="R-CEL-6809371">
    <property type="pathway name" value="Formation of the cornified envelope"/>
</dbReference>
<dbReference type="Reactome" id="R-CEL-9013404">
    <property type="pathway name" value="RAC2 GTPase cycle"/>
</dbReference>
<dbReference type="Reactome" id="R-CEL-9013408">
    <property type="pathway name" value="RHOG GTPase cycle"/>
</dbReference>
<dbReference type="Reactome" id="R-CEL-9013423">
    <property type="pathway name" value="RAC3 GTPase cycle"/>
</dbReference>
<dbReference type="PRO" id="PR:Q19319"/>
<dbReference type="Proteomes" id="UP000001940">
    <property type="component" value="Chromosome III"/>
</dbReference>
<dbReference type="Bgee" id="WBGene00000396">
    <property type="expression patterns" value="Expressed in pharyngeal muscle cell (C elegans) and 14 other cell types or tissues"/>
</dbReference>
<dbReference type="GO" id="GO:0005911">
    <property type="term" value="C:cell-cell junction"/>
    <property type="evidence" value="ECO:0000318"/>
    <property type="project" value="GO_Central"/>
</dbReference>
<dbReference type="GO" id="GO:0005886">
    <property type="term" value="C:plasma membrane"/>
    <property type="evidence" value="ECO:0007669"/>
    <property type="project" value="UniProtKB-SubCell"/>
</dbReference>
<dbReference type="GO" id="GO:0005509">
    <property type="term" value="F:calcium ion binding"/>
    <property type="evidence" value="ECO:0000318"/>
    <property type="project" value="GO_Central"/>
</dbReference>
<dbReference type="GO" id="GO:0007411">
    <property type="term" value="P:axon guidance"/>
    <property type="evidence" value="ECO:0000315"/>
    <property type="project" value="WormBase"/>
</dbReference>
<dbReference type="GO" id="GO:0098609">
    <property type="term" value="P:cell-cell adhesion"/>
    <property type="evidence" value="ECO:0000318"/>
    <property type="project" value="GO_Central"/>
</dbReference>
<dbReference type="GO" id="GO:0007163">
    <property type="term" value="P:establishment or maintenance of cell polarity"/>
    <property type="evidence" value="ECO:0000315"/>
    <property type="project" value="WormBase"/>
</dbReference>
<dbReference type="GO" id="GO:0007156">
    <property type="term" value="P:homophilic cell adhesion via plasma membrane adhesion molecules"/>
    <property type="evidence" value="ECO:0007669"/>
    <property type="project" value="InterPro"/>
</dbReference>
<dbReference type="GO" id="GO:0097402">
    <property type="term" value="P:neuroblast migration"/>
    <property type="evidence" value="ECO:0000315"/>
    <property type="project" value="WormBase"/>
</dbReference>
<dbReference type="CDD" id="cd11304">
    <property type="entry name" value="Cadherin_repeat"/>
    <property type="match status" value="28"/>
</dbReference>
<dbReference type="CDD" id="cd00053">
    <property type="entry name" value="EGF"/>
    <property type="match status" value="1"/>
</dbReference>
<dbReference type="CDD" id="cd00054">
    <property type="entry name" value="EGF_CA"/>
    <property type="match status" value="2"/>
</dbReference>
<dbReference type="CDD" id="cd00110">
    <property type="entry name" value="LamG"/>
    <property type="match status" value="1"/>
</dbReference>
<dbReference type="FunFam" id="2.10.25.10:FF:000659">
    <property type="entry name" value="Crumbs cell polarity complex component 2b"/>
    <property type="match status" value="1"/>
</dbReference>
<dbReference type="FunFam" id="2.60.40.60:FF:000020">
    <property type="entry name" value="Dachsous cadherin-related 1b"/>
    <property type="match status" value="2"/>
</dbReference>
<dbReference type="FunFam" id="2.60.40.60:FF:000116">
    <property type="entry name" value="Dachsous cadherin-related 2"/>
    <property type="match status" value="1"/>
</dbReference>
<dbReference type="FunFam" id="2.60.40.60:FF:000015">
    <property type="entry name" value="FAT atypical cadherin 1"/>
    <property type="match status" value="2"/>
</dbReference>
<dbReference type="FunFam" id="2.60.40.60:FF:000037">
    <property type="entry name" value="FAT atypical cadherin 1"/>
    <property type="match status" value="1"/>
</dbReference>
<dbReference type="FunFam" id="2.60.40.60:FF:000005">
    <property type="entry name" value="Protocadherin 9"/>
    <property type="match status" value="1"/>
</dbReference>
<dbReference type="FunFam" id="2.60.40.60:FF:000123">
    <property type="entry name" value="Protocadherin beta 4"/>
    <property type="match status" value="1"/>
</dbReference>
<dbReference type="FunFam" id="2.10.25.10:FF:000255">
    <property type="entry name" value="Sushi, nidogen and EGF-like domains 1"/>
    <property type="match status" value="1"/>
</dbReference>
<dbReference type="Gene3D" id="2.60.120.200">
    <property type="match status" value="1"/>
</dbReference>
<dbReference type="Gene3D" id="2.60.40.60">
    <property type="entry name" value="Cadherins"/>
    <property type="match status" value="32"/>
</dbReference>
<dbReference type="Gene3D" id="2.10.25.10">
    <property type="entry name" value="Laminin"/>
    <property type="match status" value="3"/>
</dbReference>
<dbReference type="InterPro" id="IPR050971">
    <property type="entry name" value="Cadherin-domain_protein"/>
</dbReference>
<dbReference type="InterPro" id="IPR002126">
    <property type="entry name" value="Cadherin-like_dom"/>
</dbReference>
<dbReference type="InterPro" id="IPR015919">
    <property type="entry name" value="Cadherin-like_sf"/>
</dbReference>
<dbReference type="InterPro" id="IPR020894">
    <property type="entry name" value="Cadherin_CS"/>
</dbReference>
<dbReference type="InterPro" id="IPR013320">
    <property type="entry name" value="ConA-like_dom_sf"/>
</dbReference>
<dbReference type="InterPro" id="IPR001881">
    <property type="entry name" value="EGF-like_Ca-bd_dom"/>
</dbReference>
<dbReference type="InterPro" id="IPR000742">
    <property type="entry name" value="EGF-like_dom"/>
</dbReference>
<dbReference type="InterPro" id="IPR001791">
    <property type="entry name" value="Laminin_G"/>
</dbReference>
<dbReference type="InterPro" id="IPR038765">
    <property type="entry name" value="Papain-like_cys_pep_sf"/>
</dbReference>
<dbReference type="PANTHER" id="PTHR24025">
    <property type="entry name" value="DESMOGLEIN FAMILY MEMBER"/>
    <property type="match status" value="1"/>
</dbReference>
<dbReference type="PANTHER" id="PTHR24025:SF23">
    <property type="entry name" value="NEURAL-CADHERIN"/>
    <property type="match status" value="1"/>
</dbReference>
<dbReference type="Pfam" id="PF00028">
    <property type="entry name" value="Cadherin"/>
    <property type="match status" value="15"/>
</dbReference>
<dbReference type="Pfam" id="PF00008">
    <property type="entry name" value="EGF"/>
    <property type="match status" value="1"/>
</dbReference>
<dbReference type="Pfam" id="PF00054">
    <property type="entry name" value="Laminin_G_1"/>
    <property type="match status" value="1"/>
</dbReference>
<dbReference type="PRINTS" id="PR00205">
    <property type="entry name" value="CADHERIN"/>
</dbReference>
<dbReference type="SMART" id="SM00112">
    <property type="entry name" value="CA"/>
    <property type="match status" value="29"/>
</dbReference>
<dbReference type="SMART" id="SM00181">
    <property type="entry name" value="EGF"/>
    <property type="match status" value="5"/>
</dbReference>
<dbReference type="SMART" id="SM00179">
    <property type="entry name" value="EGF_CA"/>
    <property type="match status" value="3"/>
</dbReference>
<dbReference type="SMART" id="SM00282">
    <property type="entry name" value="LamG"/>
    <property type="match status" value="1"/>
</dbReference>
<dbReference type="SUPFAM" id="SSF49313">
    <property type="entry name" value="Cadherin-like"/>
    <property type="match status" value="27"/>
</dbReference>
<dbReference type="SUPFAM" id="SSF49899">
    <property type="entry name" value="Concanavalin A-like lectins/glucanases"/>
    <property type="match status" value="1"/>
</dbReference>
<dbReference type="SUPFAM" id="SSF54001">
    <property type="entry name" value="Cysteine proteinases"/>
    <property type="match status" value="1"/>
</dbReference>
<dbReference type="SUPFAM" id="SSF57196">
    <property type="entry name" value="EGF/Laminin"/>
    <property type="match status" value="2"/>
</dbReference>
<dbReference type="PROSITE" id="PS00232">
    <property type="entry name" value="CADHERIN_1"/>
    <property type="match status" value="9"/>
</dbReference>
<dbReference type="PROSITE" id="PS50268">
    <property type="entry name" value="CADHERIN_2"/>
    <property type="match status" value="28"/>
</dbReference>
<dbReference type="PROSITE" id="PS00022">
    <property type="entry name" value="EGF_1"/>
    <property type="match status" value="4"/>
</dbReference>
<dbReference type="PROSITE" id="PS01186">
    <property type="entry name" value="EGF_2"/>
    <property type="match status" value="2"/>
</dbReference>
<dbReference type="PROSITE" id="PS50026">
    <property type="entry name" value="EGF_3"/>
    <property type="match status" value="3"/>
</dbReference>
<dbReference type="PROSITE" id="PS50025">
    <property type="entry name" value="LAM_G_DOMAIN"/>
    <property type="match status" value="1"/>
</dbReference>
<feature type="signal peptide" evidence="2">
    <location>
        <begin position="1"/>
        <end position="23"/>
    </location>
</feature>
<feature type="chain" id="PRO_0000250582" description="Cadherin-4">
    <location>
        <begin position="24"/>
        <end position="4328"/>
    </location>
</feature>
<feature type="topological domain" description="Extracellular" evidence="13">
    <location>
        <begin position="24"/>
        <end position="4072"/>
    </location>
</feature>
<feature type="transmembrane region" description="Helical" evidence="2">
    <location>
        <begin position="4073"/>
        <end position="4093"/>
    </location>
</feature>
<feature type="topological domain" description="Cytoplasmic" evidence="13">
    <location>
        <begin position="4094"/>
        <end position="4328"/>
    </location>
</feature>
<feature type="domain" description="Cadherin 1" evidence="3">
    <location>
        <begin position="108"/>
        <end position="153"/>
    </location>
</feature>
<feature type="domain" description="Cadherin 2" evidence="3">
    <location>
        <begin position="156"/>
        <end position="275"/>
    </location>
</feature>
<feature type="domain" description="Cadherin 3" evidence="3">
    <location>
        <begin position="384"/>
        <end position="492"/>
    </location>
</feature>
<feature type="domain" description="Cadherin 4" evidence="3">
    <location>
        <begin position="507"/>
        <end position="608"/>
    </location>
</feature>
<feature type="domain" description="Cadherin 5" evidence="3">
    <location>
        <begin position="609"/>
        <end position="720"/>
    </location>
</feature>
<feature type="domain" description="Cadherin 6" evidence="3">
    <location>
        <begin position="721"/>
        <end position="826"/>
    </location>
</feature>
<feature type="domain" description="Cadherin 7" evidence="3">
    <location>
        <begin position="827"/>
        <end position="934"/>
    </location>
</feature>
<feature type="domain" description="Cadherin 8" evidence="3">
    <location>
        <begin position="935"/>
        <end position="1051"/>
    </location>
</feature>
<feature type="domain" description="Cadherin 9" evidence="3">
    <location>
        <begin position="1047"/>
        <end position="1156"/>
    </location>
</feature>
<feature type="domain" description="Cadherin 10" evidence="3">
    <location>
        <begin position="1175"/>
        <end position="1262"/>
    </location>
</feature>
<feature type="domain" description="Cadherin 11" evidence="3">
    <location>
        <begin position="1265"/>
        <end position="1363"/>
    </location>
</feature>
<feature type="domain" description="Cadherin 12" evidence="3">
    <location>
        <begin position="1364"/>
        <end position="1467"/>
    </location>
</feature>
<feature type="domain" description="Cadherin 13" evidence="3">
    <location>
        <begin position="1476"/>
        <end position="1570"/>
    </location>
</feature>
<feature type="domain" description="Cadherin 14" evidence="3">
    <location>
        <begin position="1671"/>
        <end position="1784"/>
    </location>
</feature>
<feature type="domain" description="Cadherin 15" evidence="3">
    <location>
        <begin position="1917"/>
        <end position="1984"/>
    </location>
</feature>
<feature type="domain" description="Cadherin 16" evidence="3">
    <location>
        <begin position="2187"/>
        <end position="2285"/>
    </location>
</feature>
<feature type="domain" description="Cadherin 17" evidence="3">
    <location>
        <begin position="2286"/>
        <end position="2397"/>
    </location>
</feature>
<feature type="domain" description="Cadherin 18" evidence="3">
    <location>
        <begin position="2429"/>
        <end position="2505"/>
    </location>
</feature>
<feature type="domain" description="Cadherin 19" evidence="3">
    <location>
        <begin position="2506"/>
        <end position="2608"/>
    </location>
</feature>
<feature type="domain" description="Cadherin 20" evidence="3">
    <location>
        <begin position="2609"/>
        <end position="2712"/>
    </location>
</feature>
<feature type="domain" description="Cadherin 21" evidence="3">
    <location>
        <begin position="2719"/>
        <end position="2813"/>
    </location>
</feature>
<feature type="domain" description="Cadherin 22" evidence="3">
    <location>
        <begin position="2828"/>
        <end position="2915"/>
    </location>
</feature>
<feature type="domain" description="Cadherin 23" evidence="3">
    <location>
        <begin position="2913"/>
        <end position="3011"/>
    </location>
</feature>
<feature type="domain" description="Cadherin 24" evidence="3">
    <location>
        <begin position="3012"/>
        <end position="3113"/>
    </location>
</feature>
<feature type="domain" description="Cadherin 25" evidence="3">
    <location>
        <begin position="3114"/>
        <end position="3216"/>
    </location>
</feature>
<feature type="domain" description="Cadherin 26" evidence="3">
    <location>
        <begin position="3217"/>
        <end position="3326"/>
    </location>
</feature>
<feature type="domain" description="Cadherin 27" evidence="3">
    <location>
        <begin position="3335"/>
        <end position="3428"/>
    </location>
</feature>
<feature type="domain" description="Cadherin 28" evidence="3">
    <location>
        <begin position="3429"/>
        <end position="3554"/>
    </location>
</feature>
<feature type="domain" description="EGF-like 1" evidence="4">
    <location>
        <begin position="3706"/>
        <end position="3744"/>
    </location>
</feature>
<feature type="domain" description="Laminin G-like" evidence="5">
    <location>
        <begin position="3757"/>
        <end position="3925"/>
    </location>
</feature>
<feature type="domain" description="EGF-like 2" evidence="4">
    <location>
        <begin position="3929"/>
        <end position="3966"/>
    </location>
</feature>
<feature type="domain" description="EGF-like 3" evidence="4">
    <location>
        <begin position="3968"/>
        <end position="4004"/>
    </location>
</feature>
<feature type="region of interest" description="Disordered" evidence="7">
    <location>
        <begin position="1246"/>
        <end position="1267"/>
    </location>
</feature>
<feature type="region of interest" description="Disordered" evidence="7">
    <location>
        <begin position="4143"/>
        <end position="4215"/>
    </location>
</feature>
<feature type="region of interest" description="Disordered" evidence="7">
    <location>
        <begin position="4268"/>
        <end position="4311"/>
    </location>
</feature>
<feature type="short sequence motif" description="Cell attachment site" evidence="2">
    <location>
        <begin position="1090"/>
        <end position="1092"/>
    </location>
</feature>
<feature type="short sequence motif" description="Cell attachment site" evidence="2">
    <location>
        <begin position="4207"/>
        <end position="4209"/>
    </location>
</feature>
<feature type="compositionally biased region" description="Basic and acidic residues" evidence="7">
    <location>
        <begin position="4178"/>
        <end position="4196"/>
    </location>
</feature>
<feature type="glycosylation site" description="N-linked (GlcNAc...) asparagine" evidence="6">
    <location>
        <position position="39"/>
    </location>
</feature>
<feature type="glycosylation site" description="N-linked (GlcNAc...) asparagine" evidence="6">
    <location>
        <position position="56"/>
    </location>
</feature>
<feature type="glycosylation site" description="N-linked (GlcNAc...) asparagine" evidence="6">
    <location>
        <position position="196"/>
    </location>
</feature>
<feature type="glycosylation site" description="N-linked (GlcNAc...) asparagine" evidence="6">
    <location>
        <position position="330"/>
    </location>
</feature>
<feature type="glycosylation site" description="N-linked (GlcNAc...) asparagine" evidence="6">
    <location>
        <position position="339"/>
    </location>
</feature>
<feature type="glycosylation site" description="N-linked (GlcNAc...) asparagine" evidence="6">
    <location>
        <position position="365"/>
    </location>
</feature>
<feature type="glycosylation site" description="N-linked (GlcNAc...) asparagine" evidence="6">
    <location>
        <position position="431"/>
    </location>
</feature>
<feature type="glycosylation site" description="N-linked (GlcNAc...) asparagine" evidence="6">
    <location>
        <position position="452"/>
    </location>
</feature>
<feature type="glycosylation site" description="N-linked (GlcNAc...) asparagine" evidence="6">
    <location>
        <position position="584"/>
    </location>
</feature>
<feature type="glycosylation site" description="N-linked (GlcNAc...) asparagine" evidence="6">
    <location>
        <position position="811"/>
    </location>
</feature>
<feature type="glycosylation site" description="N-linked (GlcNAc...) asparagine" evidence="6">
    <location>
        <position position="899"/>
    </location>
</feature>
<feature type="glycosylation site" description="N-linked (GlcNAc...) asparagine" evidence="6 10">
    <location>
        <position position="1192"/>
    </location>
</feature>
<feature type="glycosylation site" description="N-linked (GlcNAc...) asparagine" evidence="6">
    <location>
        <position position="1335"/>
    </location>
</feature>
<feature type="glycosylation site" description="N-linked (GlcNAc...) asparagine" evidence="6">
    <location>
        <position position="1610"/>
    </location>
</feature>
<feature type="glycosylation site" description="N-linked (GlcNAc...) asparagine" evidence="6">
    <location>
        <position position="1895"/>
    </location>
</feature>
<feature type="glycosylation site" description="N-linked (GlcNAc...) asparagine" evidence="6">
    <location>
        <position position="2059"/>
    </location>
</feature>
<feature type="glycosylation site" description="N-linked (GlcNAc...) asparagine" evidence="6">
    <location>
        <position position="2150"/>
    </location>
</feature>
<feature type="glycosylation site" description="N-linked (GlcNAc...) asparagine" evidence="6">
    <location>
        <position position="2216"/>
    </location>
</feature>
<feature type="glycosylation site" description="N-linked (GlcNAc...) asparagine" evidence="6">
    <location>
        <position position="2367"/>
    </location>
</feature>
<feature type="glycosylation site" description="N-linked (GlcNAc...) asparagine" evidence="6">
    <location>
        <position position="2413"/>
    </location>
</feature>
<feature type="glycosylation site" description="N-linked (GlcNAc...) asparagine" evidence="6">
    <location>
        <position position="2440"/>
    </location>
</feature>
<feature type="glycosylation site" description="N-linked (GlcNAc...) asparagine" evidence="6">
    <location>
        <position position="2535"/>
    </location>
</feature>
<feature type="glycosylation site" description="N-linked (GlcNAc...) asparagine" evidence="6">
    <location>
        <position position="2844"/>
    </location>
</feature>
<feature type="glycosylation site" description="N-linked (GlcNAc...) asparagine" evidence="6 8 10">
    <location>
        <position position="2916"/>
    </location>
</feature>
<feature type="glycosylation site" description="N-linked (GlcNAc...) asparagine" evidence="6">
    <location>
        <position position="2941"/>
    </location>
</feature>
<feature type="glycosylation site" description="N-linked (GlcNAc...) asparagine" evidence="6">
    <location>
        <position position="3083"/>
    </location>
</feature>
<feature type="glycosylation site" description="N-linked (GlcNAc...) asparagine" evidence="6">
    <location>
        <position position="3143"/>
    </location>
</feature>
<feature type="glycosylation site" description="N-linked (GlcNAc...) asparagine" evidence="6">
    <location>
        <position position="3330"/>
    </location>
</feature>
<feature type="glycosylation site" description="N-linked (GlcNAc...) asparagine" evidence="6">
    <location>
        <position position="3512"/>
    </location>
</feature>
<feature type="glycosylation site" description="N-linked (GlcNAc...) asparagine" evidence="6">
    <location>
        <position position="3727"/>
    </location>
</feature>
<feature type="glycosylation site" description="N-linked (GlcNAc...) asparagine" evidence="6">
    <location>
        <position position="4043"/>
    </location>
</feature>
<feature type="disulfide bond" evidence="4">
    <location>
        <begin position="3710"/>
        <end position="3721"/>
    </location>
</feature>
<feature type="disulfide bond" evidence="4">
    <location>
        <begin position="3715"/>
        <end position="3732"/>
    </location>
</feature>
<feature type="disulfide bond" evidence="4">
    <location>
        <begin position="3734"/>
        <end position="3743"/>
    </location>
</feature>
<feature type="disulfide bond" evidence="5">
    <location>
        <begin position="3898"/>
        <end position="3925"/>
    </location>
</feature>
<feature type="disulfide bond" evidence="4">
    <location>
        <begin position="3933"/>
        <end position="3944"/>
    </location>
</feature>
<feature type="disulfide bond" evidence="4">
    <location>
        <begin position="3938"/>
        <end position="3954"/>
    </location>
</feature>
<feature type="disulfide bond" evidence="4">
    <location>
        <begin position="3956"/>
        <end position="3965"/>
    </location>
</feature>
<feature type="disulfide bond" evidence="4">
    <location>
        <begin position="3972"/>
        <end position="3983"/>
    </location>
</feature>
<feature type="disulfide bond" evidence="4">
    <location>
        <begin position="3977"/>
        <end position="3992"/>
    </location>
</feature>
<feature type="disulfide bond" evidence="4">
    <location>
        <begin position="3994"/>
        <end position="4003"/>
    </location>
</feature>
<feature type="mutagenesis site" description="In lq83; ventral D-type GABAergic axon guidance and extension defects. Irregular accumulation of snb-1-positive synaptic vesicles along the axons of ventral D-type GABAergic motorneurons." evidence="11">
    <location>
        <begin position="127"/>
        <end position="4328"/>
    </location>
</feature>
<feature type="mutagenesis site" description="In lq56; irregular accumulation of snb-1-positive synaptic vesicles along the axons of ventral D-type GABAergic motorneurons." evidence="11">
    <location>
        <begin position="839"/>
        <end position="4328"/>
    </location>
</feature>
<keyword id="KW-0106">Calcium</keyword>
<keyword id="KW-0130">Cell adhesion</keyword>
<keyword id="KW-1003">Cell membrane</keyword>
<keyword id="KW-0217">Developmental protein</keyword>
<keyword id="KW-1015">Disulfide bond</keyword>
<keyword id="KW-0245">EGF-like domain</keyword>
<keyword id="KW-0325">Glycoprotein</keyword>
<keyword id="KW-0472">Membrane</keyword>
<keyword id="KW-0479">Metal-binding</keyword>
<keyword id="KW-1185">Reference proteome</keyword>
<keyword id="KW-0677">Repeat</keyword>
<keyword id="KW-0732">Signal</keyword>
<keyword id="KW-0812">Transmembrane</keyword>
<keyword id="KW-1133">Transmembrane helix</keyword>
<evidence type="ECO:0000250" key="1"/>
<evidence type="ECO:0000255" key="2"/>
<evidence type="ECO:0000255" key="3">
    <source>
        <dbReference type="PROSITE-ProRule" id="PRU00043"/>
    </source>
</evidence>
<evidence type="ECO:0000255" key="4">
    <source>
        <dbReference type="PROSITE-ProRule" id="PRU00076"/>
    </source>
</evidence>
<evidence type="ECO:0000255" key="5">
    <source>
        <dbReference type="PROSITE-ProRule" id="PRU00122"/>
    </source>
</evidence>
<evidence type="ECO:0000255" key="6">
    <source>
        <dbReference type="PROSITE-ProRule" id="PRU00498"/>
    </source>
</evidence>
<evidence type="ECO:0000256" key="7">
    <source>
        <dbReference type="SAM" id="MobiDB-lite"/>
    </source>
</evidence>
<evidence type="ECO:0000269" key="8">
    <source>
    </source>
</evidence>
<evidence type="ECO:0000269" key="9">
    <source>
    </source>
</evidence>
<evidence type="ECO:0000269" key="10">
    <source>
    </source>
</evidence>
<evidence type="ECO:0000269" key="11">
    <source>
    </source>
</evidence>
<evidence type="ECO:0000269" key="12">
    <source ref="3"/>
</evidence>
<evidence type="ECO:0000305" key="13"/>
<evidence type="ECO:0000312" key="14">
    <source>
        <dbReference type="WormBase" id="F25F2.2"/>
    </source>
</evidence>
<reference key="1">
    <citation type="journal article" date="1998" name="Science">
        <title>Genome sequence of the nematode C. elegans: a platform for investigating biology.</title>
        <authorList>
            <consortium name="The C. elegans sequencing consortium"/>
        </authorList>
    </citation>
    <scope>NUCLEOTIDE SEQUENCE [LARGE SCALE GENOMIC DNA]</scope>
    <source>
        <strain>Bristol N2</strain>
    </source>
</reference>
<reference key="2">
    <citation type="journal article" date="2003" name="Nat. Biotechnol.">
        <title>Lectin affinity capture, isotope-coded tagging and mass spectrometry to identify N-linked glycoproteins.</title>
        <authorList>
            <person name="Kaji H."/>
            <person name="Saito H."/>
            <person name="Yamauchi Y."/>
            <person name="Shinkawa T."/>
            <person name="Taoka M."/>
            <person name="Hirabayashi J."/>
            <person name="Kasai K."/>
            <person name="Takahashi N."/>
            <person name="Isobe T."/>
        </authorList>
    </citation>
    <scope>GLYCOSYLATION [LARGE SCALE ANALYSIS] AT ASN-2916</scope>
    <scope>IDENTIFICATION BY MASS SPECTROMETRY</scope>
    <source>
        <strain>Bristol N2</strain>
    </source>
</reference>
<reference key="3">
    <citation type="book" date="2005" name="Proceedings of the 15th international C. elegans meeting">
        <title>The fat-like cadherin CDH-4 controls axon guidance in the ventral cord of C. elegans.</title>
        <authorList>
            <person name="Schmitz C."/>
            <person name="Wacker I."/>
            <person name="Schwarz V."/>
            <person name="Hutter H."/>
        </authorList>
    </citation>
    <scope>FUNCTION</scope>
    <scope>TISSUE SPECIFICITY</scope>
</reference>
<reference key="4">
    <citation type="journal article" date="2007" name="Mol. Cell. Proteomics">
        <title>Proteomics reveals N-linked glycoprotein diversity in Caenorhabditis elegans and suggests an atypical translocation mechanism for integral membrane proteins.</title>
        <authorList>
            <person name="Kaji H."/>
            <person name="Kamiie J."/>
            <person name="Kawakami H."/>
            <person name="Kido K."/>
            <person name="Yamauchi Y."/>
            <person name="Shinkawa T."/>
            <person name="Taoka M."/>
            <person name="Takahashi N."/>
            <person name="Isobe T."/>
        </authorList>
    </citation>
    <scope>GLYCOSYLATION [LARGE SCALE ANALYSIS] AT ASN-1192 AND ASN-2916</scope>
    <scope>IDENTIFICATION BY MASS SPECTROMETRY</scope>
    <source>
        <strain>Bristol N2</strain>
    </source>
</reference>
<reference key="5">
    <citation type="journal article" date="2007" name="Proc. Natl. Acad. Sci. U.S.A.">
        <title>Axon guidance genes identified in a large-scale RNAi screen using the RNAi-hypersensitive Caenorhabditis elegans strain nre-1(hd20) lin-15b(hd126).</title>
        <authorList>
            <person name="Schmitz C."/>
            <person name="Kinge P."/>
            <person name="Hutter H."/>
        </authorList>
    </citation>
    <scope>FUNCTION</scope>
</reference>
<reference key="6">
    <citation type="journal article" date="2012" name="J. Neurosci.">
        <title>Caenorhabditis elegans flamingo cadherin fmi-1 regulates GABAergic neuronal development.</title>
        <authorList>
            <person name="Najarro E.H."/>
            <person name="Wong L."/>
            <person name="Zhen M."/>
            <person name="Carpio E.P."/>
            <person name="Goncharov A."/>
            <person name="Garriga G."/>
            <person name="Lundquist E.A."/>
            <person name="Jin Y."/>
            <person name="Ackley B.D."/>
        </authorList>
    </citation>
    <scope>FUNCTION</scope>
    <scope>DEVELOPMENTAL STAGE</scope>
    <scope>DISRUPTION PHENOTYPE</scope>
    <scope>MUTAGENESIS OF 127-ARG--SER-4328 AND 839-LEU--SER-4328</scope>
</reference>
<sequence length="4328" mass="481264">MKKHRVFHLFLLIFCKAISLVTTSSSTEQIFEFTAPLYNLSVEENSIGSKYARSENSTKIGVPLPEKDANCKFRVAEIVGEKSSLFKAHSRQVGDFVFLRIRYKGDNPLNRELKDFYDILVKAMCKRRDLSNLETTARIHLRVIDRNDASPVFLVGEQGYEAEIDDDLEPFSTVLRVEASDADIGINSAIYFSLVNRSHDFIVEPVTGWVRSLRHVKPGKYSLKVKSEDRASRLYYFDENEVQPSWTADVLITVRETKPKPRRILVDQRKINPNILNNRQLAAIITLKDSPNDAIVGLKGNEKEHWFEVEPEVVGNDGTKELRWMLYAKNGSQVPKNTNVTLTIGEDYIRRSGFSISKKPVIPTNETVTIQIERLAEHLIRFLDNEKLTLKTDEMAPIGRILYRMNVNVENPDDVSLIRYSLEYSKSDLPNATLPFAIGSKNGILRVSAKINRSERVYNFKVIASLHGINEKLAEKDVSIEILDSNDHAPVFSAKWMRQTPIVIGKPGDVLVKVDATDQDEGENGKIVYKFTSELPLEINANTGEITLVEVPKKGNSWPATVWAIDLGLPLSRMSALNLMFYKNGTKIPAKPKPIIIQESENKHSPVFSSFPEIVEVTEDAPIGTVVAKLQANDEDTGYNGFIRYVIHDIAGSSHEVLTVDEQSGEITVASDLSKLMKEKLEVLDVQLKVSAIDAGTPVKSSVKTMKLRIKDVNNHSPQFDEVSYYLRISENEKPGKDIFKVTANDFDGGNNGKIKFSLGNNQEKSSVISIDAKTGIVKLLKSLDREDQDVHTFAIIASDEGFPMRVSVTNLTISVEDVNDNPPKCVVQHSRARIPEDLPHGAFVSCMAAFDEDIGQNSKLKFLLNSEKVPFRIDHHSGCIFIHAPEYPLDYHKTPFFNLSIEVADHGDPILSTSCHLHVELVDIAHNHLAIEFDDVAKEASVYENSEIGTEVIMIEAKETGDEQKVKAENLEYRIIGGDGWPHFSIDQKGTVRTTHLLDRETKSAYWITVEARDSKTDLYKDPRRRDVLHVFIRILDRNDHRPVAKKPMYIASVAENSPANVVIVKVEATDADDVDNDAAAPLMFKIERGDPQSFFRIDLTSGYITTSGIRRLDREKQSEHELWVSICDGGEPQLCSNVIVIVNVLDENDNSPTFTQAIHHYSVRSKFAGKLCRIFAVDADEGENARLTYNITEGDARFSIDNNGNIIASEAIHGDESYALTVQATDHGTPGQQFAATRVVLTANSAGQKPRKSKNSPPEISGKKSDYVIPISDADQVGLTVGKLEASDADGDELWWSISSGDPDSVFDVRQDTGQLLLAKKVELLKRGELRLNISVTDGQAWDHSTVIIQVSRQISQRPKFSASHYQTDVSERVAVGTQIYTLKASGESLGTKPLVFNLFSVDDVAMEDKIRVEPSSGNVIVMEPLDYEAARRIRAVVQVQQANMKSFATFSVNINDENDNSPYFVGHTAFAFVDESDTVDDVLATVTAFDKDRGENGIVTYSIVSGNEESLFKIDAKSGEVRLAKPLDPELQHVESILRIRAIDSAANSLKDEMSLHIRNSNEAPETAKFDRKVYQTTLYDSTRPGTPVLVLNALHHGTVSYKLEPNCTFFEVHTLSGAVHLATWLTKLKHRKSVECTAIVESTEGQQDIAKVIAKIIRTNQHSPIFRRQVYRGTIRENMPTGSSVLSKSLLPLVVSAIDEDPGSNGLVGYRMLSPKDEQMFSVDQYSGAIRTQMSFDFEKMKEYSFYVQAFDMGQPPRRSLMPSLIVVTVIDENDEPPRFPSNSLDISMILPTANGVSVGGQTAQDMDSVGSLRYFIKDQSVPFSVDSKTGDVLVKDSNGISDMTKLFDLEVFVTDGKQSASYVMKISTISTENSKFKFTRNEYHTSLIENTTLPPGSIILSVATIGDKLDHFSIVNPHEAFFIHPGTGVISSSGIALDREKSAIIRLVVQAKSHEKNPVMARALVVVGIENINDETPIFMGTPYDITIGHSDIGTVVLEPKVIDNDEGDVVTISSENMPEYFKIVGGKVVLGKKLPSIEEEDLEFNFKLIAKDNGSVHRVEEPVKIRVVDKARPVFSQNVYTAVISKESTKKSTVLVKVMAKSSLQSKSKGLIGYRILDKKSPFSVDFLTGEVRLNNLKMLAETNYTFEVEAREVTRPKMIAKAQVEIIVKSGITTHAPVFEKLKYTASTPESTSIGQRLLTIKATTSDENDTIEYSLSGSKDIEIHPETGDVTITGQLDYEKTQKYDLKLVATSSGKQVSSEAEFIVLIEDVNDEMPEFIRSDVSAKISDSAITGQFITIMSATDMDTTNSLDEESQKLLYKIVDGDETLFNISPATGELSLARPVEQDDLVNEDTKKVLNVSVTDGMFTAYAKLVVEILRSGSMQPPPRFEQSHYVANALENTIVNKSALLTVAVKGGVPPLQFSLAPTTSSNSSTSKEAWPVAIDRKTGRIHVSRVLNYHRDKRYQIPLVVEDATGRRAFSTLTLSVIDINDKPPFFVLPFYSTSISESAKEGDTVMMVSATDDDENDTIEYSLLDGSESQFFSVHPRQGTITVAKKLEHKAGVTLSLTIKATDSANPPHHATTTVEVNIASESVKVPRFSNSHYLFSVMEDADVGNVIGRVQQMETEIDEIRFTIVPGSEESDSFLPFSVERSTGKIIVKSSLDRERKNQWKMTIRADAAGGVHAITTVTVDIGDVNDNAPAFHGDYERFTISEDAAVGTSVTIFSAMDRDDSPSGRIRFSLVEENPYFDLNENSGWLTVASQLDREKIDHYKLIARATDEGGFNTDLPFTIVVSDVNDSPPQFEKEEFNIDLHLPSTSPILHFSIKDDDLSPNNVSQFFIPKGNEEGVFWIDSNNDLLLKRPEIVENKMQYQLKVTAFDGVFETSTKVKINLKSSKDSDIRCPEANKTVILAENSKKGTVVLGESSLLGPNVTFKLSDNDGNVFVVNFRNGIVKVKESDQIDYEKNQQLEFHRLTIQDNSEVCKELITVVIENLNDNRPKIIEKLLKVSIDENLPTSEDARQYITRIVAEDADFDEIKFRMVDDFGGLFQIDDINGVVTVVKPLDSEILGFFNLTVVASDGEFEDKATILVTVIDQNDNAPTFEKSTYSMKVMESESIGYELAHFRASGGDQNETIEYYLKPSDVTSFVNLNAQTGILTLAKPLDFETLSALKLTVVAKDSGVPPLETEAQVEISVMDENDNAPKFEKEKYVGKVKENSKSGEKVLTVKALDVDSEHFGAVSYELEIVSETTTDTPVLPFAINSNGDVLISQSIDYEKIKKYNLKVIAKDGGRPPLRSEALLEIHVEDENDHAPTFDDCNMTALVQEGEAIGHRLLKFSVSDLDGPKNGAPFTVEIQGDGAKSFKVNEKLELLTAKKLEYRKKDKYLLTVIAKDVKGKTTDCPLTIFIRQTSRHAPTMKPMKIQINTLQNELPEGIIGRLKASDEDEEDQNGLLRFGLVEGSIQSPRAQVQESRSTHLFRVDPNTGDIWSDHSITQGLHTFNVTVTDSKFNTVSYVEVHVTSIDNDVIDHAVSIRIRSMSVDEFMRKHVKEFRRIISHHLNLNDDSSIQLISVQAVPSTESERRSRRNSMEDVEILMTAQRGLGRGYLKPDHIYSRLKNDFQNMNDQSQRMRYQLITEMCTTGVCLRGECREVIELIEDSWTKVSTDDFSFVSPFHSRSAQCLCPDGFGGKRCEVETNQCAKSPCEQWQLCIPSVHNSTYECVCPLGMEGDKCSVPSCQNDGKCLEEAELSVGGDGYFEISLSNEIETRMELEIELKTTTHNGIIMWSRGKRDFHMLRLVNGTPEYHWNAGTGTGIVTSKTSVVDGQWHRIAISRRQRRTRMTVDDEDLQEAFSPIGSTVINLHRYSQKLVLGAKVDDGELTDGVSACFRTISVDGMKVLKTRQGMKLFGAQPGCSALTSSPCNDLPCQHAGTCISQGKSHFKCECPSRYSGNVCEIDLEPCASSPCPTGIQCIPFYNDYLCKCPNGFTGKHCEARGFEDHETSSCSKNVCGTSGQCISIPRHSLESSDFICNCTGGILQSTPCAEKSDILSTVLEFLLKAEIVIVILGVLLLLLVFCLTFITWKCCKKNRDPKYGAHCDVPHMRNTRVLVPVVPPPLPPRGFRNDSSNFISTSSVTTSHRPMVQVKPYSSDIRDSRSPSACGSSKGTRRDPLPSDKFRRVDETANRIRHSDRKDPRGDVLSSLRDSSDEWMGIDDRIDSSLKYSRAAAGTVIVGDTELMPVINDNDYMTMKPRKDKNFEREKPPAIPAHATPLESVLKLGSSSSGEEAPRNALYDDPISLDSQTFDDIDEEVNIHIS</sequence>
<protein>
    <recommendedName>
        <fullName>Cadherin-4</fullName>
    </recommendedName>
</protein>
<gene>
    <name evidence="14" type="primary">cdh-4</name>
    <name evidence="14" type="ORF">F25F2.2</name>
</gene>
<name>CADH4_CAEEL</name>
<accession>Q19319</accession>
<accession>A0A1C3NSI5</accession>
<accession>G5EE05</accession>
<accession>Q19785</accession>
<accession>Q21606</accession>
<comment type="function">
    <text evidence="9 11 12">Potential calcium-dependent cell-adhesion protein that controls axon guidance in the ventral cord.</text>
</comment>
<comment type="subcellular location">
    <subcellularLocation>
        <location evidence="13">Cell membrane</location>
        <topology evidence="13">Single-pass type I membrane protein</topology>
    </subcellularLocation>
</comment>
<comment type="tissue specificity">
    <text evidence="12">In larvae and adult, it is expressed in various tissues including pharyngeal muscle, hypodermis and gonad. In the nervous system it is expressed in sensory neurons and motor neurons in the ventral cord.</text>
</comment>
<comment type="developmental stage">
    <text evidence="11">Broadly expressed in the nervous system starting early in development (PubMed:22442082). At the L3 larval stage, broad expression throughout the nervous system ceases, and it is specifically expressed in ventral D-type GABAergic motorneurons (PubMed:22442082).</text>
</comment>
<comment type="domain">
    <text evidence="1">Three calcium ions are usually bound at the interface of each cadherin domain and rigidify the connections, imparting a strong curvature to the full-length ectodomain.</text>
</comment>
<comment type="disruption phenotype">
    <text evidence="11">RNAi-mediated knockdown results in irregular accumulation of snb-1-positive synaptic vesicles along the axons of ventral D-type GABAergic motorneurons.</text>
</comment>